<feature type="chain" id="PRO_0000052298" description="Putative cytochrome P450 138">
    <location>
        <begin position="1"/>
        <end position="441"/>
    </location>
</feature>
<feature type="binding site" description="axial binding residue" evidence="1">
    <location>
        <position position="388"/>
    </location>
    <ligand>
        <name>heme</name>
        <dbReference type="ChEBI" id="CHEBI:30413"/>
    </ligand>
    <ligandPart>
        <name>Fe</name>
        <dbReference type="ChEBI" id="CHEBI:18248"/>
    </ligandPart>
</feature>
<organism>
    <name type="scientific">Mycobacterium tuberculosis (strain ATCC 25618 / H37Rv)</name>
    <dbReference type="NCBI Taxonomy" id="83332"/>
    <lineage>
        <taxon>Bacteria</taxon>
        <taxon>Bacillati</taxon>
        <taxon>Actinomycetota</taxon>
        <taxon>Actinomycetes</taxon>
        <taxon>Mycobacteriales</taxon>
        <taxon>Mycobacteriaceae</taxon>
        <taxon>Mycobacterium</taxon>
        <taxon>Mycobacterium tuberculosis complex</taxon>
    </lineage>
</organism>
<protein>
    <recommendedName>
        <fullName>Putative cytochrome P450 138</fullName>
        <ecNumber>1.14.-.-</ecNumber>
    </recommendedName>
</protein>
<keyword id="KW-0349">Heme</keyword>
<keyword id="KW-0408">Iron</keyword>
<keyword id="KW-0479">Metal-binding</keyword>
<keyword id="KW-0503">Monooxygenase</keyword>
<keyword id="KW-0560">Oxidoreductase</keyword>
<keyword id="KW-1185">Reference proteome</keyword>
<dbReference type="EC" id="1.14.-.-"/>
<dbReference type="EMBL" id="AL123456">
    <property type="protein sequence ID" value="CCP42861.1"/>
    <property type="molecule type" value="Genomic_DNA"/>
</dbReference>
<dbReference type="PIR" id="C70616">
    <property type="entry name" value="C70616"/>
</dbReference>
<dbReference type="RefSeq" id="NP_214650.1">
    <property type="nucleotide sequence ID" value="NC_000962.3"/>
</dbReference>
<dbReference type="RefSeq" id="WP_003400938.1">
    <property type="nucleotide sequence ID" value="NZ_NVQJ01000001.1"/>
</dbReference>
<dbReference type="SMR" id="P9WPM3"/>
<dbReference type="FunCoup" id="P9WPM3">
    <property type="interactions" value="32"/>
</dbReference>
<dbReference type="STRING" id="83332.Rv0136"/>
<dbReference type="PaxDb" id="83332-Rv0136"/>
<dbReference type="DNASU" id="886868"/>
<dbReference type="GeneID" id="886868"/>
<dbReference type="KEGG" id="mtu:Rv0136"/>
<dbReference type="KEGG" id="mtv:RVBD_0136"/>
<dbReference type="TubercuList" id="Rv0136"/>
<dbReference type="eggNOG" id="COG2124">
    <property type="taxonomic scope" value="Bacteria"/>
</dbReference>
<dbReference type="InParanoid" id="P9WPM3"/>
<dbReference type="OrthoDB" id="7376058at2"/>
<dbReference type="PhylomeDB" id="P9WPM3"/>
<dbReference type="Proteomes" id="UP000001584">
    <property type="component" value="Chromosome"/>
</dbReference>
<dbReference type="GO" id="GO:0020037">
    <property type="term" value="F:heme binding"/>
    <property type="evidence" value="ECO:0007669"/>
    <property type="project" value="InterPro"/>
</dbReference>
<dbReference type="GO" id="GO:0005506">
    <property type="term" value="F:iron ion binding"/>
    <property type="evidence" value="ECO:0007669"/>
    <property type="project" value="InterPro"/>
</dbReference>
<dbReference type="GO" id="GO:0004497">
    <property type="term" value="F:monooxygenase activity"/>
    <property type="evidence" value="ECO:0007669"/>
    <property type="project" value="UniProtKB-KW"/>
</dbReference>
<dbReference type="GO" id="GO:0016491">
    <property type="term" value="F:oxidoreductase activity"/>
    <property type="evidence" value="ECO:0000318"/>
    <property type="project" value="GO_Central"/>
</dbReference>
<dbReference type="GO" id="GO:0016705">
    <property type="term" value="F:oxidoreductase activity, acting on paired donors, with incorporation or reduction of molecular oxygen"/>
    <property type="evidence" value="ECO:0007669"/>
    <property type="project" value="InterPro"/>
</dbReference>
<dbReference type="CDD" id="cd11053">
    <property type="entry name" value="CYP110-like"/>
    <property type="match status" value="1"/>
</dbReference>
<dbReference type="Gene3D" id="1.10.630.10">
    <property type="entry name" value="Cytochrome P450"/>
    <property type="match status" value="1"/>
</dbReference>
<dbReference type="InterPro" id="IPR001128">
    <property type="entry name" value="Cyt_P450"/>
</dbReference>
<dbReference type="InterPro" id="IPR017972">
    <property type="entry name" value="Cyt_P450_CS"/>
</dbReference>
<dbReference type="InterPro" id="IPR002401">
    <property type="entry name" value="Cyt_P450_E_grp-I"/>
</dbReference>
<dbReference type="InterPro" id="IPR036396">
    <property type="entry name" value="Cyt_P450_sf"/>
</dbReference>
<dbReference type="InterPro" id="IPR050121">
    <property type="entry name" value="Cytochrome_P450_monoxygenase"/>
</dbReference>
<dbReference type="PANTHER" id="PTHR24305">
    <property type="entry name" value="CYTOCHROME P450"/>
    <property type="match status" value="1"/>
</dbReference>
<dbReference type="PANTHER" id="PTHR24305:SF166">
    <property type="entry name" value="CYTOCHROME P450 12A4, MITOCHONDRIAL-RELATED"/>
    <property type="match status" value="1"/>
</dbReference>
<dbReference type="Pfam" id="PF00067">
    <property type="entry name" value="p450"/>
    <property type="match status" value="1"/>
</dbReference>
<dbReference type="PRINTS" id="PR00463">
    <property type="entry name" value="EP450I"/>
</dbReference>
<dbReference type="PRINTS" id="PR00385">
    <property type="entry name" value="P450"/>
</dbReference>
<dbReference type="SUPFAM" id="SSF48264">
    <property type="entry name" value="Cytochrome P450"/>
    <property type="match status" value="1"/>
</dbReference>
<dbReference type="PROSITE" id="PS00086">
    <property type="entry name" value="CYTOCHROME_P450"/>
    <property type="match status" value="1"/>
</dbReference>
<accession>P9WPM3</accession>
<accession>L0T5T2</accession>
<accession>P63717</accession>
<accession>P96813</accession>
<evidence type="ECO:0000250" key="1"/>
<evidence type="ECO:0000305" key="2"/>
<reference key="1">
    <citation type="journal article" date="1998" name="Nature">
        <title>Deciphering the biology of Mycobacterium tuberculosis from the complete genome sequence.</title>
        <authorList>
            <person name="Cole S.T."/>
            <person name="Brosch R."/>
            <person name="Parkhill J."/>
            <person name="Garnier T."/>
            <person name="Churcher C.M."/>
            <person name="Harris D.E."/>
            <person name="Gordon S.V."/>
            <person name="Eiglmeier K."/>
            <person name="Gas S."/>
            <person name="Barry C.E. III"/>
            <person name="Tekaia F."/>
            <person name="Badcock K."/>
            <person name="Basham D."/>
            <person name="Brown D."/>
            <person name="Chillingworth T."/>
            <person name="Connor R."/>
            <person name="Davies R.M."/>
            <person name="Devlin K."/>
            <person name="Feltwell T."/>
            <person name="Gentles S."/>
            <person name="Hamlin N."/>
            <person name="Holroyd S."/>
            <person name="Hornsby T."/>
            <person name="Jagels K."/>
            <person name="Krogh A."/>
            <person name="McLean J."/>
            <person name="Moule S."/>
            <person name="Murphy L.D."/>
            <person name="Oliver S."/>
            <person name="Osborne J."/>
            <person name="Quail M.A."/>
            <person name="Rajandream M.A."/>
            <person name="Rogers J."/>
            <person name="Rutter S."/>
            <person name="Seeger K."/>
            <person name="Skelton S."/>
            <person name="Squares S."/>
            <person name="Squares R."/>
            <person name="Sulston J.E."/>
            <person name="Taylor K."/>
            <person name="Whitehead S."/>
            <person name="Barrell B.G."/>
        </authorList>
    </citation>
    <scope>NUCLEOTIDE SEQUENCE [LARGE SCALE GENOMIC DNA]</scope>
    <source>
        <strain>ATCC 25618 / H37Rv</strain>
    </source>
</reference>
<reference key="2">
    <citation type="journal article" date="2011" name="Mol. Cell. Proteomics">
        <title>Proteogenomic analysis of Mycobacterium tuberculosis by high resolution mass spectrometry.</title>
        <authorList>
            <person name="Kelkar D.S."/>
            <person name="Kumar D."/>
            <person name="Kumar P."/>
            <person name="Balakrishnan L."/>
            <person name="Muthusamy B."/>
            <person name="Yadav A.K."/>
            <person name="Shrivastava P."/>
            <person name="Marimuthu A."/>
            <person name="Anand S."/>
            <person name="Sundaram H."/>
            <person name="Kingsbury R."/>
            <person name="Harsha H.C."/>
            <person name="Nair B."/>
            <person name="Prasad T.S."/>
            <person name="Chauhan D.S."/>
            <person name="Katoch K."/>
            <person name="Katoch V.M."/>
            <person name="Kumar P."/>
            <person name="Chaerkady R."/>
            <person name="Ramachandran S."/>
            <person name="Dash D."/>
            <person name="Pandey A."/>
        </authorList>
    </citation>
    <scope>IDENTIFICATION BY MASS SPECTROMETRY [LARGE SCALE ANALYSIS]</scope>
    <source>
        <strain>ATCC 25618 / H37Rv</strain>
    </source>
</reference>
<name>CP138_MYCTU</name>
<sequence length="441" mass="49261">MSEVVTAAPAPPVVRLPPAVRGPKLFQGLAFVVSRRRLLGRFVRRYGKAFTANILMYGRVVVVADPQLARQVFTSSPEELGNIQPNLSRMFGSGSVFALDGDDHRRRRRLLAPPFHGKSMKNYETIIEEETLRETANWPQGQAFATLPSMMHITLNAILRAIFGAGGSELDELRRLIPPWVTLGSRLAALPKPKRDYGRLSPWGRLAEWRRQYDTVIDKLIEAERADPNFADRTDVLALMLRSTYDDGSIMSRKDIGDELLTLLAAGHETTAATLGWAFERLSRHPDVLAALVEEVDNGGHELRQAAILEVQRARTVIDFAARRVNPPVYQLGEWVIPRGYSIIINIAQIHGDPDVFPQPDRFDPQRYIGSKPSPFAWIPFGGGTRRCVGAAFANMEMDVVLRTVLRHFTLETTTAAGERSHGRGVAFTPKDGGRVVMRRR</sequence>
<proteinExistence type="evidence at protein level"/>
<comment type="cofactor">
    <cofactor evidence="1">
        <name>heme</name>
        <dbReference type="ChEBI" id="CHEBI:30413"/>
    </cofactor>
</comment>
<comment type="similarity">
    <text evidence="2">Belongs to the cytochrome P450 family.</text>
</comment>
<gene>
    <name type="primary">cyp138</name>
    <name type="ordered locus">Rv0136</name>
    <name type="ORF">MTCI5.10</name>
</gene>